<proteinExistence type="inferred from homology"/>
<evidence type="ECO:0000255" key="1">
    <source>
        <dbReference type="HAMAP-Rule" id="MF_01220"/>
    </source>
</evidence>
<name>PYRH_PROM1</name>
<sequence>MTYSRALIKLSGEALMGDKPYGIDPEIVQSIAKDVSKVVENGTQIAIVVGGGNIFRGLKGSAAGMDRATADYVGMLATVMNAITLQDGLERAGVPTRVQSAIDMQQIAEPYIRRRAIRHLEKGRVVVFGGGCGNPFFTTDTTAALRAAEINAEVVFKATKVDGVYDRDPKKFTDAVKYDNLTFQDVLANEIGVMDSTAIALCKDNKIPIVVFNIFQPGNIAKAISGEPIGSRISNSS</sequence>
<comment type="function">
    <text evidence="1">Catalyzes the reversible phosphorylation of UMP to UDP.</text>
</comment>
<comment type="catalytic activity">
    <reaction evidence="1">
        <text>UMP + ATP = UDP + ADP</text>
        <dbReference type="Rhea" id="RHEA:24400"/>
        <dbReference type="ChEBI" id="CHEBI:30616"/>
        <dbReference type="ChEBI" id="CHEBI:57865"/>
        <dbReference type="ChEBI" id="CHEBI:58223"/>
        <dbReference type="ChEBI" id="CHEBI:456216"/>
        <dbReference type="EC" id="2.7.4.22"/>
    </reaction>
</comment>
<comment type="activity regulation">
    <text evidence="1">Inhibited by UTP.</text>
</comment>
<comment type="pathway">
    <text evidence="1">Pyrimidine metabolism; CTP biosynthesis via de novo pathway; UDP from UMP (UMPK route): step 1/1.</text>
</comment>
<comment type="subunit">
    <text evidence="1">Homohexamer.</text>
</comment>
<comment type="subcellular location">
    <subcellularLocation>
        <location evidence="1">Cytoplasm</location>
    </subcellularLocation>
</comment>
<comment type="similarity">
    <text evidence="1">Belongs to the UMP kinase family.</text>
</comment>
<organism>
    <name type="scientific">Prochlorococcus marinus (strain NATL1A)</name>
    <dbReference type="NCBI Taxonomy" id="167555"/>
    <lineage>
        <taxon>Bacteria</taxon>
        <taxon>Bacillati</taxon>
        <taxon>Cyanobacteriota</taxon>
        <taxon>Cyanophyceae</taxon>
        <taxon>Synechococcales</taxon>
        <taxon>Prochlorococcaceae</taxon>
        <taxon>Prochlorococcus</taxon>
    </lineage>
</organism>
<feature type="chain" id="PRO_0000323924" description="Uridylate kinase">
    <location>
        <begin position="1"/>
        <end position="237"/>
    </location>
</feature>
<feature type="binding site" evidence="1">
    <location>
        <begin position="9"/>
        <end position="12"/>
    </location>
    <ligand>
        <name>ATP</name>
        <dbReference type="ChEBI" id="CHEBI:30616"/>
    </ligand>
</feature>
<feature type="binding site" evidence="1">
    <location>
        <position position="51"/>
    </location>
    <ligand>
        <name>UMP</name>
        <dbReference type="ChEBI" id="CHEBI:57865"/>
    </ligand>
</feature>
<feature type="binding site" evidence="1">
    <location>
        <position position="52"/>
    </location>
    <ligand>
        <name>ATP</name>
        <dbReference type="ChEBI" id="CHEBI:30616"/>
    </ligand>
</feature>
<feature type="binding site" evidence="1">
    <location>
        <position position="56"/>
    </location>
    <ligand>
        <name>ATP</name>
        <dbReference type="ChEBI" id="CHEBI:30616"/>
    </ligand>
</feature>
<feature type="binding site" evidence="1">
    <location>
        <position position="71"/>
    </location>
    <ligand>
        <name>UMP</name>
        <dbReference type="ChEBI" id="CHEBI:57865"/>
    </ligand>
</feature>
<feature type="binding site" evidence="1">
    <location>
        <begin position="132"/>
        <end position="139"/>
    </location>
    <ligand>
        <name>UMP</name>
        <dbReference type="ChEBI" id="CHEBI:57865"/>
    </ligand>
</feature>
<feature type="binding site" evidence="1">
    <location>
        <position position="159"/>
    </location>
    <ligand>
        <name>ATP</name>
        <dbReference type="ChEBI" id="CHEBI:30616"/>
    </ligand>
</feature>
<feature type="binding site" evidence="1">
    <location>
        <position position="165"/>
    </location>
    <ligand>
        <name>ATP</name>
        <dbReference type="ChEBI" id="CHEBI:30616"/>
    </ligand>
</feature>
<feature type="binding site" evidence="1">
    <location>
        <position position="168"/>
    </location>
    <ligand>
        <name>ATP</name>
        <dbReference type="ChEBI" id="CHEBI:30616"/>
    </ligand>
</feature>
<keyword id="KW-0067">ATP-binding</keyword>
<keyword id="KW-0963">Cytoplasm</keyword>
<keyword id="KW-0418">Kinase</keyword>
<keyword id="KW-0547">Nucleotide-binding</keyword>
<keyword id="KW-0665">Pyrimidine biosynthesis</keyword>
<keyword id="KW-0808">Transferase</keyword>
<protein>
    <recommendedName>
        <fullName evidence="1">Uridylate kinase</fullName>
        <shortName evidence="1">UK</shortName>
        <ecNumber evidence="1">2.7.4.22</ecNumber>
    </recommendedName>
    <alternativeName>
        <fullName evidence="1">Uridine monophosphate kinase</fullName>
        <shortName evidence="1">UMP kinase</shortName>
        <shortName evidence="1">UMPK</shortName>
    </alternativeName>
</protein>
<reference key="1">
    <citation type="journal article" date="2007" name="PLoS Genet.">
        <title>Patterns and implications of gene gain and loss in the evolution of Prochlorococcus.</title>
        <authorList>
            <person name="Kettler G.C."/>
            <person name="Martiny A.C."/>
            <person name="Huang K."/>
            <person name="Zucker J."/>
            <person name="Coleman M.L."/>
            <person name="Rodrigue S."/>
            <person name="Chen F."/>
            <person name="Lapidus A."/>
            <person name="Ferriera S."/>
            <person name="Johnson J."/>
            <person name="Steglich C."/>
            <person name="Church G.M."/>
            <person name="Richardson P."/>
            <person name="Chisholm S.W."/>
        </authorList>
    </citation>
    <scope>NUCLEOTIDE SEQUENCE [LARGE SCALE GENOMIC DNA]</scope>
    <source>
        <strain>NATL1A</strain>
    </source>
</reference>
<dbReference type="EC" id="2.7.4.22" evidence="1"/>
<dbReference type="EMBL" id="CP000553">
    <property type="protein sequence ID" value="ABM75141.1"/>
    <property type="molecule type" value="Genomic_DNA"/>
</dbReference>
<dbReference type="RefSeq" id="WP_011294486.1">
    <property type="nucleotide sequence ID" value="NC_008819.1"/>
</dbReference>
<dbReference type="SMR" id="A2C0Y1"/>
<dbReference type="KEGG" id="pme:NATL1_05791"/>
<dbReference type="eggNOG" id="COG0528">
    <property type="taxonomic scope" value="Bacteria"/>
</dbReference>
<dbReference type="HOGENOM" id="CLU_033861_0_0_3"/>
<dbReference type="UniPathway" id="UPA00159">
    <property type="reaction ID" value="UER00275"/>
</dbReference>
<dbReference type="Proteomes" id="UP000002592">
    <property type="component" value="Chromosome"/>
</dbReference>
<dbReference type="GO" id="GO:0005737">
    <property type="term" value="C:cytoplasm"/>
    <property type="evidence" value="ECO:0007669"/>
    <property type="project" value="UniProtKB-SubCell"/>
</dbReference>
<dbReference type="GO" id="GO:0005524">
    <property type="term" value="F:ATP binding"/>
    <property type="evidence" value="ECO:0007669"/>
    <property type="project" value="UniProtKB-KW"/>
</dbReference>
<dbReference type="GO" id="GO:0033862">
    <property type="term" value="F:UMP kinase activity"/>
    <property type="evidence" value="ECO:0007669"/>
    <property type="project" value="UniProtKB-EC"/>
</dbReference>
<dbReference type="GO" id="GO:0044210">
    <property type="term" value="P:'de novo' CTP biosynthetic process"/>
    <property type="evidence" value="ECO:0007669"/>
    <property type="project" value="UniProtKB-UniRule"/>
</dbReference>
<dbReference type="GO" id="GO:0006225">
    <property type="term" value="P:UDP biosynthetic process"/>
    <property type="evidence" value="ECO:0007669"/>
    <property type="project" value="TreeGrafter"/>
</dbReference>
<dbReference type="CDD" id="cd04254">
    <property type="entry name" value="AAK_UMPK-PyrH-Ec"/>
    <property type="match status" value="1"/>
</dbReference>
<dbReference type="FunFam" id="3.40.1160.10:FF:000001">
    <property type="entry name" value="Uridylate kinase"/>
    <property type="match status" value="1"/>
</dbReference>
<dbReference type="Gene3D" id="3.40.1160.10">
    <property type="entry name" value="Acetylglutamate kinase-like"/>
    <property type="match status" value="1"/>
</dbReference>
<dbReference type="HAMAP" id="MF_01220_B">
    <property type="entry name" value="PyrH_B"/>
    <property type="match status" value="1"/>
</dbReference>
<dbReference type="InterPro" id="IPR036393">
    <property type="entry name" value="AceGlu_kinase-like_sf"/>
</dbReference>
<dbReference type="InterPro" id="IPR001048">
    <property type="entry name" value="Asp/Glu/Uridylate_kinase"/>
</dbReference>
<dbReference type="InterPro" id="IPR011817">
    <property type="entry name" value="Uridylate_kinase"/>
</dbReference>
<dbReference type="InterPro" id="IPR015963">
    <property type="entry name" value="Uridylate_kinase_bac"/>
</dbReference>
<dbReference type="NCBIfam" id="TIGR02075">
    <property type="entry name" value="pyrH_bact"/>
    <property type="match status" value="1"/>
</dbReference>
<dbReference type="PANTHER" id="PTHR42833">
    <property type="entry name" value="URIDYLATE KINASE"/>
    <property type="match status" value="1"/>
</dbReference>
<dbReference type="PANTHER" id="PTHR42833:SF4">
    <property type="entry name" value="URIDYLATE KINASE PUMPKIN, CHLOROPLASTIC"/>
    <property type="match status" value="1"/>
</dbReference>
<dbReference type="Pfam" id="PF00696">
    <property type="entry name" value="AA_kinase"/>
    <property type="match status" value="1"/>
</dbReference>
<dbReference type="PIRSF" id="PIRSF005650">
    <property type="entry name" value="Uridylate_kin"/>
    <property type="match status" value="1"/>
</dbReference>
<dbReference type="SUPFAM" id="SSF53633">
    <property type="entry name" value="Carbamate kinase-like"/>
    <property type="match status" value="1"/>
</dbReference>
<accession>A2C0Y1</accession>
<gene>
    <name evidence="1" type="primary">pyrH</name>
    <name type="ordered locus">NATL1_05791</name>
</gene>